<accession>Q390Q5</accession>
<gene>
    <name evidence="1" type="primary">mqo</name>
    <name type="ordered locus">Bcep18194_B2950</name>
</gene>
<evidence type="ECO:0000255" key="1">
    <source>
        <dbReference type="HAMAP-Rule" id="MF_00212"/>
    </source>
</evidence>
<evidence type="ECO:0000256" key="2">
    <source>
        <dbReference type="SAM" id="MobiDB-lite"/>
    </source>
</evidence>
<proteinExistence type="inferred from homology"/>
<comment type="catalytic activity">
    <reaction evidence="1">
        <text>(S)-malate + a quinone = a quinol + oxaloacetate</text>
        <dbReference type="Rhea" id="RHEA:46012"/>
        <dbReference type="ChEBI" id="CHEBI:15589"/>
        <dbReference type="ChEBI" id="CHEBI:16452"/>
        <dbReference type="ChEBI" id="CHEBI:24646"/>
        <dbReference type="ChEBI" id="CHEBI:132124"/>
        <dbReference type="EC" id="1.1.5.4"/>
    </reaction>
</comment>
<comment type="cofactor">
    <cofactor evidence="1">
        <name>FAD</name>
        <dbReference type="ChEBI" id="CHEBI:57692"/>
    </cofactor>
</comment>
<comment type="pathway">
    <text evidence="1">Carbohydrate metabolism; tricarboxylic acid cycle; oxaloacetate from (S)-malate (quinone route): step 1/1.</text>
</comment>
<comment type="similarity">
    <text evidence="1">Belongs to the MQO family.</text>
</comment>
<dbReference type="EC" id="1.1.5.4" evidence="1"/>
<dbReference type="EMBL" id="CP000152">
    <property type="protein sequence ID" value="ABB13061.1"/>
    <property type="molecule type" value="Genomic_DNA"/>
</dbReference>
<dbReference type="RefSeq" id="WP_011356540.1">
    <property type="nucleotide sequence ID" value="NC_007511.1"/>
</dbReference>
<dbReference type="SMR" id="Q390Q5"/>
<dbReference type="GeneID" id="45099253"/>
<dbReference type="KEGG" id="bur:Bcep18194_B2950"/>
<dbReference type="PATRIC" id="fig|482957.22.peg.6772"/>
<dbReference type="HOGENOM" id="CLU_028151_0_0_4"/>
<dbReference type="UniPathway" id="UPA00223">
    <property type="reaction ID" value="UER01008"/>
</dbReference>
<dbReference type="Proteomes" id="UP000002705">
    <property type="component" value="Chromosome 2"/>
</dbReference>
<dbReference type="GO" id="GO:0047545">
    <property type="term" value="F:2-hydroxyglutarate dehydrogenase activity"/>
    <property type="evidence" value="ECO:0007669"/>
    <property type="project" value="TreeGrafter"/>
</dbReference>
<dbReference type="GO" id="GO:0008924">
    <property type="term" value="F:L-malate dehydrogenase (quinone) activity"/>
    <property type="evidence" value="ECO:0007669"/>
    <property type="project" value="UniProtKB-UniRule"/>
</dbReference>
<dbReference type="GO" id="GO:0006099">
    <property type="term" value="P:tricarboxylic acid cycle"/>
    <property type="evidence" value="ECO:0007669"/>
    <property type="project" value="UniProtKB-UniRule"/>
</dbReference>
<dbReference type="HAMAP" id="MF_00212">
    <property type="entry name" value="MQO"/>
    <property type="match status" value="1"/>
</dbReference>
<dbReference type="InterPro" id="IPR036188">
    <property type="entry name" value="FAD/NAD-bd_sf"/>
</dbReference>
<dbReference type="InterPro" id="IPR006231">
    <property type="entry name" value="MQO"/>
</dbReference>
<dbReference type="NCBIfam" id="TIGR01320">
    <property type="entry name" value="mal_quin_oxido"/>
    <property type="match status" value="1"/>
</dbReference>
<dbReference type="NCBIfam" id="NF003603">
    <property type="entry name" value="PRK05257.1-1"/>
    <property type="match status" value="1"/>
</dbReference>
<dbReference type="NCBIfam" id="NF003605">
    <property type="entry name" value="PRK05257.1-4"/>
    <property type="match status" value="1"/>
</dbReference>
<dbReference type="NCBIfam" id="NF003606">
    <property type="entry name" value="PRK05257.2-1"/>
    <property type="match status" value="1"/>
</dbReference>
<dbReference type="NCBIfam" id="NF003611">
    <property type="entry name" value="PRK05257.3-2"/>
    <property type="match status" value="1"/>
</dbReference>
<dbReference type="NCBIfam" id="NF009875">
    <property type="entry name" value="PRK13339.1"/>
    <property type="match status" value="1"/>
</dbReference>
<dbReference type="PANTHER" id="PTHR43104">
    <property type="entry name" value="L-2-HYDROXYGLUTARATE DEHYDROGENASE, MITOCHONDRIAL"/>
    <property type="match status" value="1"/>
</dbReference>
<dbReference type="PANTHER" id="PTHR43104:SF2">
    <property type="entry name" value="L-2-HYDROXYGLUTARATE DEHYDROGENASE, MITOCHONDRIAL"/>
    <property type="match status" value="1"/>
</dbReference>
<dbReference type="Pfam" id="PF06039">
    <property type="entry name" value="Mqo"/>
    <property type="match status" value="1"/>
</dbReference>
<dbReference type="SUPFAM" id="SSF51905">
    <property type="entry name" value="FAD/NAD(P)-binding domain"/>
    <property type="match status" value="1"/>
</dbReference>
<reference key="1">
    <citation type="submission" date="2005-10" db="EMBL/GenBank/DDBJ databases">
        <title>Complete sequence of chromosome 2 of Burkholderia sp. 383.</title>
        <authorList>
            <consortium name="US DOE Joint Genome Institute"/>
            <person name="Copeland A."/>
            <person name="Lucas S."/>
            <person name="Lapidus A."/>
            <person name="Barry K."/>
            <person name="Detter J.C."/>
            <person name="Glavina T."/>
            <person name="Hammon N."/>
            <person name="Israni S."/>
            <person name="Pitluck S."/>
            <person name="Chain P."/>
            <person name="Malfatti S."/>
            <person name="Shin M."/>
            <person name="Vergez L."/>
            <person name="Schmutz J."/>
            <person name="Larimer F."/>
            <person name="Land M."/>
            <person name="Kyrpides N."/>
            <person name="Lykidis A."/>
            <person name="Richardson P."/>
        </authorList>
    </citation>
    <scope>NUCLEOTIDE SEQUENCE [LARGE SCALE GENOMIC DNA]</scope>
    <source>
        <strain>ATCC 17760 / DSM 23089 / LMG 22485 / NCIMB 9086 / R18194 / 383</strain>
    </source>
</reference>
<protein>
    <recommendedName>
        <fullName evidence="1">Probable malate:quinone oxidoreductase</fullName>
        <ecNumber evidence="1">1.1.5.4</ecNumber>
    </recommendedName>
    <alternativeName>
        <fullName evidence="1">MQO</fullName>
    </alternativeName>
    <alternativeName>
        <fullName evidence="1">Malate dehydrogenase [quinone]</fullName>
    </alternativeName>
</protein>
<feature type="chain" id="PRO_0000325491" description="Probable malate:quinone oxidoreductase">
    <location>
        <begin position="1"/>
        <end position="553"/>
    </location>
</feature>
<feature type="region of interest" description="Disordered" evidence="2">
    <location>
        <begin position="524"/>
        <end position="553"/>
    </location>
</feature>
<keyword id="KW-0274">FAD</keyword>
<keyword id="KW-0285">Flavoprotein</keyword>
<keyword id="KW-0560">Oxidoreductase</keyword>
<keyword id="KW-0816">Tricarboxylic acid cycle</keyword>
<organism>
    <name type="scientific">Burkholderia lata (strain ATCC 17760 / DSM 23089 / LMG 22485 / NCIMB 9086 / R18194 / 383)</name>
    <dbReference type="NCBI Taxonomy" id="482957"/>
    <lineage>
        <taxon>Bacteria</taxon>
        <taxon>Pseudomonadati</taxon>
        <taxon>Pseudomonadota</taxon>
        <taxon>Betaproteobacteria</taxon>
        <taxon>Burkholderiales</taxon>
        <taxon>Burkholderiaceae</taxon>
        <taxon>Burkholderia</taxon>
        <taxon>Burkholderia cepacia complex</taxon>
    </lineage>
</organism>
<name>MQO_BURL3</name>
<sequence>MKKGSAVIKTLRVILSALALCVATSSAHAADTKKVDVLLVGGGIMSSTLGVWLHELQPDWSMTMVERLDGVALESSNGWNNAGTGHSALAELNYTPEKADGKIDISKAIEINESFQISRQFWAWQVKQGVLKNPHSFINSTPHMSFVWGDDNVRFLKKRYEALQASPLFRGMQYSEDYDQIKQWVPLMMEGRDPKQKVAATWTPIGTDVNFGEITRQFVGYLKTQPNFTLSLSSEVREISRNADGTWHVSWVKLHSDEPAQSVDAKFVFIGAGGGALHLLQASGVPEAKDYGAFPVGGSFLVTENPEVVKQHLAKAYGKASVGSPPMSVPHLDTRIIDGKKIILFGPFATFSTKFLKNGSYFDLLKSTNTHNVAPMMRVGVDEFPLVQYLAGQLMLSDDDRFNALKEYFPNAKKEDWRLWQAGQRVQIIKRDPVKGGVLKLGTEIVASQDGSIAGLLGASPGASTAAPIMLNLMKKVFKDKVATPEWQQKIRQIVPSYGTKLNDSPAKVVEEWTYTSDVLQLSPPPKIDVNTPSQATGTAPARPAKASADMAL</sequence>